<keyword id="KW-0002">3D-structure</keyword>
<keyword id="KW-0025">Alternative splicing</keyword>
<keyword id="KW-0227">DNA damage</keyword>
<keyword id="KW-0234">DNA repair</keyword>
<keyword id="KW-0238">DNA-binding</keyword>
<keyword id="KW-0539">Nucleus</keyword>
<keyword id="KW-0597">Phosphoprotein</keyword>
<keyword id="KW-1267">Proteomics identification</keyword>
<keyword id="KW-1185">Reference proteome</keyword>
<name>FP100_HUMAN</name>
<reference key="1">
    <citation type="journal article" date="2004" name="Nat. Genet.">
        <title>Complete sequencing and characterization of 21,243 full-length human cDNAs.</title>
        <authorList>
            <person name="Ota T."/>
            <person name="Suzuki Y."/>
            <person name="Nishikawa T."/>
            <person name="Otsuki T."/>
            <person name="Sugiyama T."/>
            <person name="Irie R."/>
            <person name="Wakamatsu A."/>
            <person name="Hayashi K."/>
            <person name="Sato H."/>
            <person name="Nagai K."/>
            <person name="Kimura K."/>
            <person name="Makita H."/>
            <person name="Sekine M."/>
            <person name="Obayashi M."/>
            <person name="Nishi T."/>
            <person name="Shibahara T."/>
            <person name="Tanaka T."/>
            <person name="Ishii S."/>
            <person name="Yamamoto J."/>
            <person name="Saito K."/>
            <person name="Kawai Y."/>
            <person name="Isono Y."/>
            <person name="Nakamura Y."/>
            <person name="Nagahari K."/>
            <person name="Murakami K."/>
            <person name="Yasuda T."/>
            <person name="Iwayanagi T."/>
            <person name="Wagatsuma M."/>
            <person name="Shiratori A."/>
            <person name="Sudo H."/>
            <person name="Hosoiri T."/>
            <person name="Kaku Y."/>
            <person name="Kodaira H."/>
            <person name="Kondo H."/>
            <person name="Sugawara M."/>
            <person name="Takahashi M."/>
            <person name="Kanda K."/>
            <person name="Yokoi T."/>
            <person name="Furuya T."/>
            <person name="Kikkawa E."/>
            <person name="Omura Y."/>
            <person name="Abe K."/>
            <person name="Kamihara K."/>
            <person name="Katsuta N."/>
            <person name="Sato K."/>
            <person name="Tanikawa M."/>
            <person name="Yamazaki M."/>
            <person name="Ninomiya K."/>
            <person name="Ishibashi T."/>
            <person name="Yamashita H."/>
            <person name="Murakawa K."/>
            <person name="Fujimori K."/>
            <person name="Tanai H."/>
            <person name="Kimata M."/>
            <person name="Watanabe M."/>
            <person name="Hiraoka S."/>
            <person name="Chiba Y."/>
            <person name="Ishida S."/>
            <person name="Ono Y."/>
            <person name="Takiguchi S."/>
            <person name="Watanabe S."/>
            <person name="Yosida M."/>
            <person name="Hotuta T."/>
            <person name="Kusano J."/>
            <person name="Kanehori K."/>
            <person name="Takahashi-Fujii A."/>
            <person name="Hara H."/>
            <person name="Tanase T.-O."/>
            <person name="Nomura Y."/>
            <person name="Togiya S."/>
            <person name="Komai F."/>
            <person name="Hara R."/>
            <person name="Takeuchi K."/>
            <person name="Arita M."/>
            <person name="Imose N."/>
            <person name="Musashino K."/>
            <person name="Yuuki H."/>
            <person name="Oshima A."/>
            <person name="Sasaki N."/>
            <person name="Aotsuka S."/>
            <person name="Yoshikawa Y."/>
            <person name="Matsunawa H."/>
            <person name="Ichihara T."/>
            <person name="Shiohata N."/>
            <person name="Sano S."/>
            <person name="Moriya S."/>
            <person name="Momiyama H."/>
            <person name="Satoh N."/>
            <person name="Takami S."/>
            <person name="Terashima Y."/>
            <person name="Suzuki O."/>
            <person name="Nakagawa S."/>
            <person name="Senoh A."/>
            <person name="Mizoguchi H."/>
            <person name="Goto Y."/>
            <person name="Shimizu F."/>
            <person name="Wakebe H."/>
            <person name="Hishigaki H."/>
            <person name="Watanabe T."/>
            <person name="Sugiyama A."/>
            <person name="Takemoto M."/>
            <person name="Kawakami B."/>
            <person name="Yamazaki M."/>
            <person name="Watanabe K."/>
            <person name="Kumagai A."/>
            <person name="Itakura S."/>
            <person name="Fukuzumi Y."/>
            <person name="Fujimori Y."/>
            <person name="Komiyama M."/>
            <person name="Tashiro H."/>
            <person name="Tanigami A."/>
            <person name="Fujiwara T."/>
            <person name="Ono T."/>
            <person name="Yamada K."/>
            <person name="Fujii Y."/>
            <person name="Ozaki K."/>
            <person name="Hirao M."/>
            <person name="Ohmori Y."/>
            <person name="Kawabata A."/>
            <person name="Hikiji T."/>
            <person name="Kobatake N."/>
            <person name="Inagaki H."/>
            <person name="Ikema Y."/>
            <person name="Okamoto S."/>
            <person name="Okitani R."/>
            <person name="Kawakami T."/>
            <person name="Noguchi S."/>
            <person name="Itoh T."/>
            <person name="Shigeta K."/>
            <person name="Senba T."/>
            <person name="Matsumura K."/>
            <person name="Nakajima Y."/>
            <person name="Mizuno T."/>
            <person name="Morinaga M."/>
            <person name="Sasaki M."/>
            <person name="Togashi T."/>
            <person name="Oyama M."/>
            <person name="Hata H."/>
            <person name="Watanabe M."/>
            <person name="Komatsu T."/>
            <person name="Mizushima-Sugano J."/>
            <person name="Satoh T."/>
            <person name="Shirai Y."/>
            <person name="Takahashi Y."/>
            <person name="Nakagawa K."/>
            <person name="Okumura K."/>
            <person name="Nagase T."/>
            <person name="Nomura N."/>
            <person name="Kikuchi H."/>
            <person name="Masuho Y."/>
            <person name="Yamashita R."/>
            <person name="Nakai K."/>
            <person name="Yada T."/>
            <person name="Nakamura Y."/>
            <person name="Ohara O."/>
            <person name="Isogai T."/>
            <person name="Sugano S."/>
        </authorList>
    </citation>
    <scope>NUCLEOTIDE SEQUENCE [LARGE SCALE MRNA] (ISOFORM 2)</scope>
    <scope>NUCLEOTIDE SEQUENCE [LARGE SCALE MRNA] OF 557-881 (ISOFORMS 1/3)</scope>
    <scope>VARIANTS LEU-660 AND ALA-817</scope>
</reference>
<reference key="2">
    <citation type="journal article" date="2006" name="Nature">
        <title>DNA sequence of human chromosome 17 and analysis of rearrangement in the human lineage.</title>
        <authorList>
            <person name="Zody M.C."/>
            <person name="Garber M."/>
            <person name="Adams D.J."/>
            <person name="Sharpe T."/>
            <person name="Harrow J."/>
            <person name="Lupski J.R."/>
            <person name="Nicholson C."/>
            <person name="Searle S.M."/>
            <person name="Wilming L."/>
            <person name="Young S.K."/>
            <person name="Abouelleil A."/>
            <person name="Allen N.R."/>
            <person name="Bi W."/>
            <person name="Bloom T."/>
            <person name="Borowsky M.L."/>
            <person name="Bugalter B.E."/>
            <person name="Butler J."/>
            <person name="Chang J.L."/>
            <person name="Chen C.-K."/>
            <person name="Cook A."/>
            <person name="Corum B."/>
            <person name="Cuomo C.A."/>
            <person name="de Jong P.J."/>
            <person name="DeCaprio D."/>
            <person name="Dewar K."/>
            <person name="FitzGerald M."/>
            <person name="Gilbert J."/>
            <person name="Gibson R."/>
            <person name="Gnerre S."/>
            <person name="Goldstein S."/>
            <person name="Grafham D.V."/>
            <person name="Grocock R."/>
            <person name="Hafez N."/>
            <person name="Hagopian D.S."/>
            <person name="Hart E."/>
            <person name="Norman C.H."/>
            <person name="Humphray S."/>
            <person name="Jaffe D.B."/>
            <person name="Jones M."/>
            <person name="Kamal M."/>
            <person name="Khodiyar V.K."/>
            <person name="LaButti K."/>
            <person name="Laird G."/>
            <person name="Lehoczky J."/>
            <person name="Liu X."/>
            <person name="Lokyitsang T."/>
            <person name="Loveland J."/>
            <person name="Lui A."/>
            <person name="Macdonald P."/>
            <person name="Major J.E."/>
            <person name="Matthews L."/>
            <person name="Mauceli E."/>
            <person name="McCarroll S.A."/>
            <person name="Mihalev A.H."/>
            <person name="Mudge J."/>
            <person name="Nguyen C."/>
            <person name="Nicol R."/>
            <person name="O'Leary S.B."/>
            <person name="Osoegawa K."/>
            <person name="Schwartz D.C."/>
            <person name="Shaw-Smith C."/>
            <person name="Stankiewicz P."/>
            <person name="Steward C."/>
            <person name="Swarbreck D."/>
            <person name="Venkataraman V."/>
            <person name="Whittaker C.A."/>
            <person name="Yang X."/>
            <person name="Zimmer A.R."/>
            <person name="Bradley A."/>
            <person name="Hubbard T."/>
            <person name="Birren B.W."/>
            <person name="Rogers J."/>
            <person name="Lander E.S."/>
            <person name="Nusbaum C."/>
        </authorList>
    </citation>
    <scope>NUCLEOTIDE SEQUENCE [LARGE SCALE GENOMIC DNA]</scope>
</reference>
<reference key="3">
    <citation type="journal article" date="2004" name="Genome Res.">
        <title>The status, quality, and expansion of the NIH full-length cDNA project: the Mammalian Gene Collection (MGC).</title>
        <authorList>
            <consortium name="The MGC Project Team"/>
        </authorList>
    </citation>
    <scope>NUCLEOTIDE SEQUENCE [LARGE SCALE MRNA] (ISOFORMS 1 AND 3)</scope>
    <scope>VARIANTS LEU-660 AND ALA-817</scope>
    <source>
        <tissue>Brain</tissue>
    </source>
</reference>
<reference key="4">
    <citation type="submission" date="2005-06" db="EMBL/GenBank/DDBJ databases">
        <title>Cloning of human full open reading frames in Gateway(TM) system entry vector (pDONR201).</title>
        <authorList>
            <person name="Ebert L."/>
            <person name="Schick M."/>
            <person name="Neubert P."/>
            <person name="Schatten R."/>
            <person name="Henze S."/>
            <person name="Korn B."/>
        </authorList>
    </citation>
    <scope>NUCLEOTIDE SEQUENCE [LARGE SCALE MRNA] OF 1-150 (ISOFORM 1)</scope>
    <source>
        <tissue>T-cell</tissue>
    </source>
</reference>
<reference key="5">
    <citation type="journal article" date="2007" name="BMC Genomics">
        <title>The full-ORF clone resource of the German cDNA consortium.</title>
        <authorList>
            <person name="Bechtel S."/>
            <person name="Rosenfelder H."/>
            <person name="Duda A."/>
            <person name="Schmidt C.P."/>
            <person name="Ernst U."/>
            <person name="Wellenreuther R."/>
            <person name="Mehrle A."/>
            <person name="Schuster C."/>
            <person name="Bahr A."/>
            <person name="Bloecker H."/>
            <person name="Heubner D."/>
            <person name="Hoerlein A."/>
            <person name="Michel G."/>
            <person name="Wedler H."/>
            <person name="Koehrer K."/>
            <person name="Ottenwaelder B."/>
            <person name="Poustka A."/>
            <person name="Wiemann S."/>
            <person name="Schupp I."/>
        </authorList>
    </citation>
    <scope>NUCLEOTIDE SEQUENCE [LARGE SCALE MRNA] OF 482-881 (ISOFORMS 1/3)</scope>
    <source>
        <tissue>Melanoma</tissue>
    </source>
</reference>
<reference key="6">
    <citation type="journal article" date="2007" name="EMBO J.">
        <title>FAAP100 is essential for activation of the Fanconi anemia-associated DNA damage response pathway.</title>
        <authorList>
            <person name="Ling C."/>
            <person name="Ishiai M."/>
            <person name="Ali A.M."/>
            <person name="Medhurst A.L."/>
            <person name="Neveling K."/>
            <person name="Kalb R."/>
            <person name="Yan Z."/>
            <person name="Xue Y."/>
            <person name="Oostra A.B."/>
            <person name="Auerbach A.D."/>
            <person name="Hoatlin M.E."/>
            <person name="Schindler D."/>
            <person name="Joenje H."/>
            <person name="de Winter J.P."/>
            <person name="Takata M."/>
            <person name="Meetei A.R."/>
            <person name="Wang W."/>
        </authorList>
    </citation>
    <scope>FUNCTION</scope>
    <scope>SUBCELLULAR LOCATION</scope>
    <scope>IDENTIFICATION IN THE FA CORE COMPLEX</scope>
</reference>
<reference key="7">
    <citation type="journal article" date="2008" name="Proc. Natl. Acad. Sci. U.S.A.">
        <title>A quantitative atlas of mitotic phosphorylation.</title>
        <authorList>
            <person name="Dephoure N."/>
            <person name="Zhou C."/>
            <person name="Villen J."/>
            <person name="Beausoleil S.A."/>
            <person name="Bakalarski C.E."/>
            <person name="Elledge S.J."/>
            <person name="Gygi S.P."/>
        </authorList>
    </citation>
    <scope>PHOSPHORYLATION [LARGE SCALE ANALYSIS] AT SER-667</scope>
    <scope>IDENTIFICATION BY MASS SPECTROMETRY [LARGE SCALE ANALYSIS]</scope>
    <source>
        <tissue>Cervix carcinoma</tissue>
    </source>
</reference>
<reference key="8">
    <citation type="journal article" date="2013" name="J. Proteome Res.">
        <title>Toward a comprehensive characterization of a human cancer cell phosphoproteome.</title>
        <authorList>
            <person name="Zhou H."/>
            <person name="Di Palma S."/>
            <person name="Preisinger C."/>
            <person name="Peng M."/>
            <person name="Polat A.N."/>
            <person name="Heck A.J."/>
            <person name="Mohammed S."/>
        </authorList>
    </citation>
    <scope>PHOSPHORYLATION [LARGE SCALE ANALYSIS] AT SER-667</scope>
    <scope>IDENTIFICATION BY MASS SPECTROMETRY [LARGE SCALE ANALYSIS]</scope>
    <source>
        <tissue>Erythroleukemia</tissue>
    </source>
</reference>
<reference key="9">
    <citation type="journal article" date="2014" name="J. Proteomics">
        <title>An enzyme assisted RP-RPLC approach for in-depth analysis of human liver phosphoproteome.</title>
        <authorList>
            <person name="Bian Y."/>
            <person name="Song C."/>
            <person name="Cheng K."/>
            <person name="Dong M."/>
            <person name="Wang F."/>
            <person name="Huang J."/>
            <person name="Sun D."/>
            <person name="Wang L."/>
            <person name="Ye M."/>
            <person name="Zou H."/>
        </authorList>
    </citation>
    <scope>PHOSPHORYLATION [LARGE SCALE ANALYSIS] AT SER-667</scope>
    <scope>IDENTIFICATION BY MASS SPECTROMETRY [LARGE SCALE ANALYSIS]</scope>
    <source>
        <tissue>Liver</tissue>
    </source>
</reference>
<organism>
    <name type="scientific">Homo sapiens</name>
    <name type="common">Human</name>
    <dbReference type="NCBI Taxonomy" id="9606"/>
    <lineage>
        <taxon>Eukaryota</taxon>
        <taxon>Metazoa</taxon>
        <taxon>Chordata</taxon>
        <taxon>Craniata</taxon>
        <taxon>Vertebrata</taxon>
        <taxon>Euteleostomi</taxon>
        <taxon>Mammalia</taxon>
        <taxon>Eutheria</taxon>
        <taxon>Euarchontoglires</taxon>
        <taxon>Primates</taxon>
        <taxon>Haplorrhini</taxon>
        <taxon>Catarrhini</taxon>
        <taxon>Hominidae</taxon>
        <taxon>Homo</taxon>
    </lineage>
</organism>
<feature type="chain" id="PRO_0000289130" description="Fanconi anemia core complex-associated protein 100">
    <location>
        <begin position="1"/>
        <end position="881"/>
    </location>
</feature>
<feature type="region of interest" description="Disordered" evidence="1">
    <location>
        <begin position="94"/>
        <end position="119"/>
    </location>
</feature>
<feature type="modified residue" description="Phosphoserine" evidence="10 11 12">
    <location>
        <position position="667"/>
    </location>
</feature>
<feature type="splice variant" id="VSP_025922" description="In isoform 2." evidence="5">
    <location>
        <begin position="1"/>
        <end position="628"/>
    </location>
</feature>
<feature type="splice variant" id="VSP_038262" description="In isoform 3." evidence="6">
    <location>
        <begin position="1"/>
        <end position="151"/>
    </location>
</feature>
<feature type="splice variant" id="VSP_025923" description="In isoform 2." evidence="5">
    <original>SDVLPEQEGVCLPLSRHTVDMLQCLRFPGLAPPHTRA</original>
    <variation>MPASFPMLRCARSPCWTVCWSPWCRALPDGRCSCLSS</variation>
    <location>
        <begin position="629"/>
        <end position="665"/>
    </location>
</feature>
<feature type="sequence variant" id="VAR_032582" description="In dbSNP:rs11552304." evidence="2 3">
    <original>P</original>
    <variation>L</variation>
    <location>
        <position position="660"/>
    </location>
</feature>
<feature type="sequence variant" id="VAR_032583" description="In dbSNP:rs14422." evidence="2 3">
    <original>T</original>
    <variation>A</variation>
    <location>
        <position position="817"/>
    </location>
</feature>
<feature type="sequence conflict" description="In Ref. 3; BC008883." evidence="8" ref="3">
    <original>R</original>
    <variation>C</variation>
    <location>
        <position position="654"/>
    </location>
</feature>
<dbReference type="EMBL" id="AK024644">
    <property type="protein sequence ID" value="BAB14944.1"/>
    <property type="molecule type" value="mRNA"/>
</dbReference>
<dbReference type="EMBL" id="AK025828">
    <property type="protein sequence ID" value="BAB15251.1"/>
    <property type="status" value="ALT_INIT"/>
    <property type="molecule type" value="mRNA"/>
</dbReference>
<dbReference type="EMBL" id="AC137896">
    <property type="status" value="NOT_ANNOTATED_CDS"/>
    <property type="molecule type" value="Genomic_DNA"/>
</dbReference>
<dbReference type="EMBL" id="CR978826">
    <property type="status" value="NOT_ANNOTATED_CDS"/>
    <property type="molecule type" value="mRNA"/>
</dbReference>
<dbReference type="EMBL" id="BC001724">
    <property type="protein sequence ID" value="AAH01724.1"/>
    <property type="molecule type" value="mRNA"/>
</dbReference>
<dbReference type="EMBL" id="BC008883">
    <property type="status" value="NOT_ANNOTATED_CDS"/>
    <property type="molecule type" value="mRNA"/>
</dbReference>
<dbReference type="EMBL" id="BC021968">
    <property type="protein sequence ID" value="AAH21968.1"/>
    <property type="status" value="ALT_INIT"/>
    <property type="molecule type" value="mRNA"/>
</dbReference>
<dbReference type="EMBL" id="BC117139">
    <property type="protein sequence ID" value="AAI17140.1"/>
    <property type="molecule type" value="mRNA"/>
</dbReference>
<dbReference type="EMBL" id="BC117141">
    <property type="protein sequence ID" value="AAI17142.1"/>
    <property type="molecule type" value="mRNA"/>
</dbReference>
<dbReference type="EMBL" id="AL834374">
    <property type="protein sequence ID" value="CAD39037.2"/>
    <property type="status" value="ALT_INIT"/>
    <property type="molecule type" value="mRNA"/>
</dbReference>
<dbReference type="CCDS" id="CCDS32765.2">
    <molecule id="Q0VG06-1"/>
</dbReference>
<dbReference type="RefSeq" id="NP_079437.5">
    <molecule id="Q0VG06-1"/>
    <property type="nucleotide sequence ID" value="NM_025161.5"/>
</dbReference>
<dbReference type="RefSeq" id="XP_006722175.1">
    <property type="nucleotide sequence ID" value="XM_006722112.3"/>
</dbReference>
<dbReference type="RefSeq" id="XP_016880651.1">
    <property type="nucleotide sequence ID" value="XM_017025162.1"/>
</dbReference>
<dbReference type="RefSeq" id="XP_016880652.1">
    <property type="nucleotide sequence ID" value="XM_017025163.1"/>
</dbReference>
<dbReference type="RefSeq" id="XP_047292804.1">
    <molecule id="Q0VG06-3"/>
    <property type="nucleotide sequence ID" value="XM_047436848.1"/>
</dbReference>
<dbReference type="PDB" id="7KZP">
    <property type="method" value="EM"/>
    <property type="resolution" value="3.10 A"/>
    <property type="chains" value="P/Q=1-881"/>
</dbReference>
<dbReference type="PDB" id="7KZQ">
    <property type="method" value="EM"/>
    <property type="resolution" value="4.20 A"/>
    <property type="chains" value="P/Q=1-881"/>
</dbReference>
<dbReference type="PDB" id="7KZR">
    <property type="method" value="EM"/>
    <property type="resolution" value="4.20 A"/>
    <property type="chains" value="P/Q=1-881"/>
</dbReference>
<dbReference type="PDB" id="7KZS">
    <property type="method" value="EM"/>
    <property type="resolution" value="4.20 A"/>
    <property type="chains" value="P/Q=1-881"/>
</dbReference>
<dbReference type="PDB" id="7KZT">
    <property type="method" value="EM"/>
    <property type="resolution" value="4.20 A"/>
    <property type="chains" value="P/Q=1-881"/>
</dbReference>
<dbReference type="PDB" id="7KZV">
    <property type="method" value="EM"/>
    <property type="resolution" value="4.20 A"/>
    <property type="chains" value="P/Q=1-881"/>
</dbReference>
<dbReference type="PDBsum" id="7KZP"/>
<dbReference type="PDBsum" id="7KZQ"/>
<dbReference type="PDBsum" id="7KZR"/>
<dbReference type="PDBsum" id="7KZS"/>
<dbReference type="PDBsum" id="7KZT"/>
<dbReference type="PDBsum" id="7KZV"/>
<dbReference type="EMDB" id="EMD-23085"/>
<dbReference type="EMDB" id="EMD-23086"/>
<dbReference type="EMDB" id="EMD-23087"/>
<dbReference type="EMDB" id="EMD-23088"/>
<dbReference type="EMDB" id="EMD-23089"/>
<dbReference type="EMDB" id="EMD-23090"/>
<dbReference type="SMR" id="Q0VG06"/>
<dbReference type="BioGRID" id="123196">
    <property type="interactions" value="121"/>
</dbReference>
<dbReference type="ComplexPortal" id="CPX-6263">
    <property type="entry name" value="Fanconi anemia ubiquitin ligase complex"/>
</dbReference>
<dbReference type="CORUM" id="Q0VG06"/>
<dbReference type="FunCoup" id="Q0VG06">
    <property type="interactions" value="1911"/>
</dbReference>
<dbReference type="IntAct" id="Q0VG06">
    <property type="interactions" value="81"/>
</dbReference>
<dbReference type="MINT" id="Q0VG06"/>
<dbReference type="STRING" id="9606.ENSP00000333283"/>
<dbReference type="GlyGen" id="Q0VG06">
    <property type="glycosylation" value="1 site, 1 O-linked glycan (1 site)"/>
</dbReference>
<dbReference type="iPTMnet" id="Q0VG06"/>
<dbReference type="PhosphoSitePlus" id="Q0VG06"/>
<dbReference type="BioMuta" id="FAAP100"/>
<dbReference type="DMDM" id="313104237"/>
<dbReference type="CPTAC" id="CPTAC-3224"/>
<dbReference type="CPTAC" id="CPTAC-3225"/>
<dbReference type="jPOST" id="Q0VG06"/>
<dbReference type="MassIVE" id="Q0VG06"/>
<dbReference type="PaxDb" id="9606-ENSP00000333283"/>
<dbReference type="PeptideAtlas" id="Q0VG06"/>
<dbReference type="ProteomicsDB" id="58837">
    <molecule id="Q0VG06-1"/>
</dbReference>
<dbReference type="ProteomicsDB" id="58838">
    <molecule id="Q0VG06-2"/>
</dbReference>
<dbReference type="ProteomicsDB" id="58839">
    <molecule id="Q0VG06-3"/>
</dbReference>
<dbReference type="Pumba" id="Q0VG06"/>
<dbReference type="TopDownProteomics" id="Q0VG06-1">
    <molecule id="Q0VG06-1"/>
</dbReference>
<dbReference type="Antibodypedia" id="19824">
    <property type="antibodies" value="69 antibodies from 17 providers"/>
</dbReference>
<dbReference type="CPTC" id="Q0VG06">
    <property type="antibodies" value="2 antibodies"/>
</dbReference>
<dbReference type="DNASU" id="80233"/>
<dbReference type="Ensembl" id="ENST00000327787.13">
    <molecule id="Q0VG06-1"/>
    <property type="protein sequence ID" value="ENSP00000333283.8"/>
    <property type="gene ID" value="ENSG00000185504.17"/>
</dbReference>
<dbReference type="GeneID" id="80233"/>
<dbReference type="KEGG" id="hsa:80233"/>
<dbReference type="MANE-Select" id="ENST00000327787.13">
    <property type="protein sequence ID" value="ENSP00000333283.8"/>
    <property type="RefSeq nucleotide sequence ID" value="NM_025161.6"/>
    <property type="RefSeq protein sequence ID" value="NP_079437.5"/>
</dbReference>
<dbReference type="UCSC" id="uc002kaq.4">
    <molecule id="Q0VG06-1"/>
    <property type="organism name" value="human"/>
</dbReference>
<dbReference type="AGR" id="HGNC:26171"/>
<dbReference type="CTD" id="80233"/>
<dbReference type="DisGeNET" id="80233"/>
<dbReference type="GeneCards" id="FAAP100"/>
<dbReference type="GeneReviews" id="FAAP100"/>
<dbReference type="HGNC" id="HGNC:26171">
    <property type="gene designation" value="FAAP100"/>
</dbReference>
<dbReference type="HPA" id="ENSG00000185504">
    <property type="expression patterns" value="Low tissue specificity"/>
</dbReference>
<dbReference type="MalaCards" id="FAAP100"/>
<dbReference type="MIM" id="611301">
    <property type="type" value="gene"/>
</dbReference>
<dbReference type="neXtProt" id="NX_Q0VG06"/>
<dbReference type="OpenTargets" id="ENSG00000185504"/>
<dbReference type="PharmGKB" id="PA142672253"/>
<dbReference type="VEuPathDB" id="HostDB:ENSG00000185504"/>
<dbReference type="eggNOG" id="ENOG502QTI0">
    <property type="taxonomic scope" value="Eukaryota"/>
</dbReference>
<dbReference type="GeneTree" id="ENSGT00390000016682"/>
<dbReference type="HOGENOM" id="CLU_018470_0_0_1"/>
<dbReference type="InParanoid" id="Q0VG06"/>
<dbReference type="OMA" id="RVHHAVI"/>
<dbReference type="OrthoDB" id="6495021at2759"/>
<dbReference type="PAN-GO" id="Q0VG06">
    <property type="GO annotations" value="1 GO annotation based on evolutionary models"/>
</dbReference>
<dbReference type="PhylomeDB" id="Q0VG06"/>
<dbReference type="TreeFam" id="TF330817"/>
<dbReference type="PathwayCommons" id="Q0VG06"/>
<dbReference type="Reactome" id="R-HSA-6783310">
    <property type="pathway name" value="Fanconi Anemia Pathway"/>
</dbReference>
<dbReference type="Reactome" id="R-HSA-9833482">
    <property type="pathway name" value="PKR-mediated signaling"/>
</dbReference>
<dbReference type="SignaLink" id="Q0VG06"/>
<dbReference type="SIGNOR" id="Q0VG06"/>
<dbReference type="BioGRID-ORCS" id="80233">
    <property type="hits" value="102 hits in 1143 CRISPR screens"/>
</dbReference>
<dbReference type="ChiTaRS" id="FAAP100">
    <property type="organism name" value="human"/>
</dbReference>
<dbReference type="GenomeRNAi" id="80233"/>
<dbReference type="Pharos" id="Q0VG06">
    <property type="development level" value="Tdark"/>
</dbReference>
<dbReference type="PRO" id="PR:Q0VG06"/>
<dbReference type="Proteomes" id="UP000005640">
    <property type="component" value="Chromosome 17"/>
</dbReference>
<dbReference type="RNAct" id="Q0VG06">
    <property type="molecule type" value="protein"/>
</dbReference>
<dbReference type="Bgee" id="ENSG00000185504">
    <property type="expression patterns" value="Expressed in right hemisphere of cerebellum and 125 other cell types or tissues"/>
</dbReference>
<dbReference type="ExpressionAtlas" id="Q0VG06">
    <property type="expression patterns" value="baseline and differential"/>
</dbReference>
<dbReference type="GO" id="GO:0000785">
    <property type="term" value="C:chromatin"/>
    <property type="evidence" value="ECO:0000314"/>
    <property type="project" value="ComplexPortal"/>
</dbReference>
<dbReference type="GO" id="GO:0005829">
    <property type="term" value="C:cytosol"/>
    <property type="evidence" value="ECO:0000314"/>
    <property type="project" value="HPA"/>
</dbReference>
<dbReference type="GO" id="GO:0043240">
    <property type="term" value="C:Fanconi anaemia nuclear complex"/>
    <property type="evidence" value="ECO:0000303"/>
    <property type="project" value="ComplexPortal"/>
</dbReference>
<dbReference type="GO" id="GO:0005654">
    <property type="term" value="C:nucleoplasm"/>
    <property type="evidence" value="ECO:0000314"/>
    <property type="project" value="HPA"/>
</dbReference>
<dbReference type="GO" id="GO:0003677">
    <property type="term" value="F:DNA binding"/>
    <property type="evidence" value="ECO:0007669"/>
    <property type="project" value="UniProtKB-KW"/>
</dbReference>
<dbReference type="GO" id="GO:0036297">
    <property type="term" value="P:interstrand cross-link repair"/>
    <property type="evidence" value="ECO:0000303"/>
    <property type="project" value="ComplexPortal"/>
</dbReference>
<dbReference type="InterPro" id="IPR029251">
    <property type="entry name" value="Faap100"/>
</dbReference>
<dbReference type="PANTHER" id="PTHR14890">
    <property type="entry name" value="FANCONI ANEMIA CORE COMPLEX-ASSOCIATED PROTEIN 100"/>
    <property type="match status" value="1"/>
</dbReference>
<dbReference type="PANTHER" id="PTHR14890:SF1">
    <property type="entry name" value="FANCONI ANEMIA CORE COMPLEX-ASSOCIATED PROTEIN 100"/>
    <property type="match status" value="1"/>
</dbReference>
<dbReference type="Pfam" id="PF15146">
    <property type="entry name" value="FANCAA"/>
    <property type="match status" value="1"/>
</dbReference>
<comment type="function">
    <text evidence="4">Plays a role in Fanconi anemia-associated DNA damage response network. Regulates FANCD2 monoubiquitination and the stability of the FA core complex. Induces chromosomal instability as well as hypersensitivity to DNA cross-linking agents, when repressed.</text>
</comment>
<comment type="subunit">
    <text evidence="4">Belongs to the multisubunit FA complex composed of FANCA, FANCB, FANCC, FANCE, FANCF, FANCG, FANCL/PHF9, FANCM, FAAP24 and FAAP100. Forms a subcomplex with FANCB and FANCL.</text>
</comment>
<comment type="interaction">
    <interactant intactId="EBI-2557990">
        <id>Q0VG06</id>
    </interactant>
    <interactant intactId="EBI-12086950">
        <id>Q53S33</id>
        <label>BOLA3</label>
    </interactant>
    <organismsDiffer>false</organismsDiffer>
    <experiments>2</experiments>
</comment>
<comment type="interaction">
    <interactant intactId="EBI-2557990">
        <id>Q0VG06</id>
    </interactant>
    <interactant intactId="EBI-349854">
        <id>P13569</id>
        <label>CFTR</label>
    </interactant>
    <organismsDiffer>false</organismsDiffer>
    <experiments>4</experiments>
</comment>
<comment type="interaction">
    <interactant intactId="EBI-2557990">
        <id>Q0VG06</id>
    </interactant>
    <interactant intactId="EBI-81570">
        <id>O15360</id>
        <label>FANCA</label>
    </interactant>
    <organismsDiffer>false</organismsDiffer>
    <experiments>4</experiments>
</comment>
<comment type="interaction">
    <interactant intactId="EBI-2557990">
        <id>Q0VG06</id>
    </interactant>
    <interactant intactId="EBI-2557983">
        <id>Q8NB91</id>
        <label>FANCB</label>
    </interactant>
    <organismsDiffer>false</organismsDiffer>
    <experiments>4</experiments>
</comment>
<comment type="interaction">
    <interactant intactId="EBI-2557990">
        <id>Q0VG06</id>
    </interactant>
    <interactant intactId="EBI-6423032">
        <id>Q8WTQ7</id>
        <label>GRK7</label>
    </interactant>
    <organismsDiffer>false</organismsDiffer>
    <experiments>2</experiments>
</comment>
<comment type="interaction">
    <interactant intactId="EBI-10226932">
        <id>Q0VG06-3</id>
    </interactant>
    <interactant intactId="EBI-9357295">
        <id>Q9BTE6-2</id>
        <label>AARSD1</label>
    </interactant>
    <organismsDiffer>false</organismsDiffer>
    <experiments>3</experiments>
</comment>
<comment type="interaction">
    <interactant intactId="EBI-10226932">
        <id>Q0VG06-3</id>
    </interactant>
    <interactant intactId="EBI-740785">
        <id>P49639</id>
        <label>HOXA1</label>
    </interactant>
    <organismsDiffer>false</organismsDiffer>
    <experiments>3</experiments>
</comment>
<comment type="interaction">
    <interactant intactId="EBI-10226932">
        <id>Q0VG06-3</id>
    </interactant>
    <interactant intactId="EBI-724076">
        <id>Q99750</id>
        <label>MDFI</label>
    </interactant>
    <organismsDiffer>false</organismsDiffer>
    <experiments>3</experiments>
</comment>
<comment type="subcellular location">
    <subcellularLocation>
        <location evidence="4">Nucleus</location>
    </subcellularLocation>
</comment>
<comment type="alternative products">
    <event type="alternative splicing"/>
    <isoform>
        <id>Q0VG06-1</id>
        <name>1</name>
        <name>b</name>
        <sequence type="displayed"/>
    </isoform>
    <isoform>
        <id>Q0VG06-2</id>
        <name>2</name>
        <sequence type="described" ref="VSP_025922 VSP_025923"/>
    </isoform>
    <isoform>
        <id>Q0VG06-3</id>
        <name>3</name>
        <name>a</name>
        <sequence type="described" ref="VSP_038262"/>
    </isoform>
</comment>
<comment type="sequence caution" evidence="8">
    <conflict type="erroneous initiation">
        <sequence resource="EMBL-CDS" id="AAH21968"/>
    </conflict>
    <text>Truncated N-terminus.</text>
</comment>
<comment type="sequence caution" evidence="8">
    <conflict type="erroneous initiation">
        <sequence resource="EMBL-CDS" id="BAB15251"/>
    </conflict>
    <text>Truncated N-terminus.</text>
</comment>
<comment type="sequence caution" evidence="8">
    <conflict type="erroneous initiation">
        <sequence resource="EMBL-CDS" id="CAD39037"/>
    </conflict>
    <text>Truncated N-terminus.</text>
</comment>
<protein>
    <recommendedName>
        <fullName evidence="7 9">Fanconi anemia core complex-associated protein 100</fullName>
    </recommendedName>
    <alternativeName>
        <fullName>Fanconi anemia-associated protein of 100 kDa</fullName>
    </alternativeName>
</protein>
<accession>Q0VG06</accession>
<accession>A6NNM1</accession>
<accession>Q8N3F7</accession>
<accession>Q9BV13</accession>
<accession>Q9H6K7</accession>
<accession>Q9H7E8</accession>
<evidence type="ECO:0000256" key="1">
    <source>
        <dbReference type="SAM" id="MobiDB-lite"/>
    </source>
</evidence>
<evidence type="ECO:0000269" key="2">
    <source>
    </source>
</evidence>
<evidence type="ECO:0000269" key="3">
    <source>
    </source>
</evidence>
<evidence type="ECO:0000269" key="4">
    <source>
    </source>
</evidence>
<evidence type="ECO:0000303" key="5">
    <source>
    </source>
</evidence>
<evidence type="ECO:0000303" key="6">
    <source>
    </source>
</evidence>
<evidence type="ECO:0000303" key="7">
    <source>
    </source>
</evidence>
<evidence type="ECO:0000305" key="8"/>
<evidence type="ECO:0000312" key="9">
    <source>
        <dbReference type="HGNC" id="HGNC:26171"/>
    </source>
</evidence>
<evidence type="ECO:0007744" key="10">
    <source>
    </source>
</evidence>
<evidence type="ECO:0007744" key="11">
    <source>
    </source>
</evidence>
<evidence type="ECO:0007744" key="12">
    <source>
    </source>
</evidence>
<sequence>MAGAAPRVRYLAGFCCPLGGLAAGKPRVLCHEAEVFLSTGSELVYVYDQEGGLLTAAFRFPDQVWHLELLAPRRLLYALCARRGLYCLSLDHPGRSRSTSQDDRDSEDGDQPSPVIPVDPDACILPDAALCAFTLLDSVLVTLVQGPARWKMQLFEQPCPGEDPRPGGQIGEVELSSYTPPAGVPGKPAAPHFLPVLCSVSPSGSRVPHDLLGGSGGFTLEDALFGLLFGADATLLQSPVVLCGLPDGQLCCVILKALVTSRSAPGDPNALVKILHHLEEPVIFIGALKTEPQAAEAAENFLPDEDVHCDCLVAFGHHGRMLAIKASWDESGKLVPELREYCLPGPVLCAACGGGGRVYHSTPSDLCVVDLSRGSTPLGPEQPEEGPGGLPPMLCPASLNICSVVSLSASPRTHEGGTKLLALSAKGRLMTCSLDLDSEMPGPARMTTESAGQKIKELLSGIGNISERVSFLKKAVDQRNKALTSLNEAMNVSCALLSSGTGPRPISCTTSTTWSRLQTQDVLMATCVLENSSSFSLDQGWTLCIQVLTSSCALDLDSACSAITYTIPVDQLGPGARREVTLPLGPGENGGLDLPVTVSCTLFYSLREVVGGALAPSDSEDPFLDECPSDVLPEQEGVCLPLSRHTVDMLQCLRFPGLAPPHTRAPSPLGPTRDPVATFLETCREPGSQPAGPASLRAEYLPPSVASIKVSAELLRAALKDGHSGVPLCCATLQWLLAENAAVDVVRARALSSIQGVAPDGANVHLIVREVAMTDLCPAGPIQAVEIQVESSSLADICRAHHAVVGRMQTMVTEQATQGSSAPDLRVQYLRQIHANHETLLREVQTLRDRLCTEDEASSCATAQRLLQVYRQLRHPSLILL</sequence>
<gene>
    <name evidence="7 9" type="primary">FAAP100</name>
    <name type="synonym">C17orf70</name>
</gene>
<proteinExistence type="evidence at protein level"/>